<sequence length="111" mass="13050">MQSNNKLKKNQDFRMVYQKGRSMANKLLIIYIVNNNLEYNRIGFTVSKKVGNSVVRSRVKRLMKESYRLNEGKIKTSHDIVFIARPNCKESTYKEIESALLHLIRKMKLIS</sequence>
<evidence type="ECO:0000255" key="1">
    <source>
        <dbReference type="HAMAP-Rule" id="MF_00227"/>
    </source>
</evidence>
<organism>
    <name type="scientific">Alkaliphilus metalliredigens (strain QYMF)</name>
    <dbReference type="NCBI Taxonomy" id="293826"/>
    <lineage>
        <taxon>Bacteria</taxon>
        <taxon>Bacillati</taxon>
        <taxon>Bacillota</taxon>
        <taxon>Clostridia</taxon>
        <taxon>Peptostreptococcales</taxon>
        <taxon>Natronincolaceae</taxon>
        <taxon>Alkaliphilus</taxon>
    </lineage>
</organism>
<proteinExistence type="inferred from homology"/>
<comment type="function">
    <text evidence="1">RNaseP catalyzes the removal of the 5'-leader sequence from pre-tRNA to produce the mature 5'-terminus. It can also cleave other RNA substrates such as 4.5S RNA. The protein component plays an auxiliary but essential role in vivo by binding to the 5'-leader sequence and broadening the substrate specificity of the ribozyme.</text>
</comment>
<comment type="catalytic activity">
    <reaction evidence="1">
        <text>Endonucleolytic cleavage of RNA, removing 5'-extranucleotides from tRNA precursor.</text>
        <dbReference type="EC" id="3.1.26.5"/>
    </reaction>
</comment>
<comment type="subunit">
    <text evidence="1">Consists of a catalytic RNA component (M1 or rnpB) and a protein subunit.</text>
</comment>
<comment type="similarity">
    <text evidence="1">Belongs to the RnpA family.</text>
</comment>
<protein>
    <recommendedName>
        <fullName evidence="1">Ribonuclease P protein component</fullName>
        <shortName evidence="1">RNase P protein</shortName>
        <shortName evidence="1">RNaseP protein</shortName>
        <ecNumber evidence="1">3.1.26.5</ecNumber>
    </recommendedName>
    <alternativeName>
        <fullName evidence="1">Protein C5</fullName>
    </alternativeName>
</protein>
<accession>A6TXE9</accession>
<reference key="1">
    <citation type="journal article" date="2016" name="Genome Announc.">
        <title>Complete genome sequence of Alkaliphilus metalliredigens strain QYMF, an alkaliphilic and metal-reducing bacterium isolated from borax-contaminated leachate ponds.</title>
        <authorList>
            <person name="Hwang C."/>
            <person name="Copeland A."/>
            <person name="Lucas S."/>
            <person name="Lapidus A."/>
            <person name="Barry K."/>
            <person name="Detter J.C."/>
            <person name="Glavina Del Rio T."/>
            <person name="Hammon N."/>
            <person name="Israni S."/>
            <person name="Dalin E."/>
            <person name="Tice H."/>
            <person name="Pitluck S."/>
            <person name="Chertkov O."/>
            <person name="Brettin T."/>
            <person name="Bruce D."/>
            <person name="Han C."/>
            <person name="Schmutz J."/>
            <person name="Larimer F."/>
            <person name="Land M.L."/>
            <person name="Hauser L."/>
            <person name="Kyrpides N."/>
            <person name="Mikhailova N."/>
            <person name="Ye Q."/>
            <person name="Zhou J."/>
            <person name="Richardson P."/>
            <person name="Fields M.W."/>
        </authorList>
    </citation>
    <scope>NUCLEOTIDE SEQUENCE [LARGE SCALE GENOMIC DNA]</scope>
    <source>
        <strain>QYMF</strain>
    </source>
</reference>
<dbReference type="EC" id="3.1.26.5" evidence="1"/>
<dbReference type="EMBL" id="CP000724">
    <property type="protein sequence ID" value="ABR50867.1"/>
    <property type="molecule type" value="Genomic_DNA"/>
</dbReference>
<dbReference type="RefSeq" id="WP_012065752.1">
    <property type="nucleotide sequence ID" value="NC_009633.1"/>
</dbReference>
<dbReference type="SMR" id="A6TXE9"/>
<dbReference type="STRING" id="293826.Amet_4801"/>
<dbReference type="KEGG" id="amt:Amet_4801"/>
<dbReference type="eggNOG" id="COG0594">
    <property type="taxonomic scope" value="Bacteria"/>
</dbReference>
<dbReference type="HOGENOM" id="CLU_117179_9_3_9"/>
<dbReference type="OrthoDB" id="9810867at2"/>
<dbReference type="Proteomes" id="UP000001572">
    <property type="component" value="Chromosome"/>
</dbReference>
<dbReference type="GO" id="GO:0030677">
    <property type="term" value="C:ribonuclease P complex"/>
    <property type="evidence" value="ECO:0007669"/>
    <property type="project" value="TreeGrafter"/>
</dbReference>
<dbReference type="GO" id="GO:0042781">
    <property type="term" value="F:3'-tRNA processing endoribonuclease activity"/>
    <property type="evidence" value="ECO:0007669"/>
    <property type="project" value="TreeGrafter"/>
</dbReference>
<dbReference type="GO" id="GO:0004526">
    <property type="term" value="F:ribonuclease P activity"/>
    <property type="evidence" value="ECO:0007669"/>
    <property type="project" value="UniProtKB-UniRule"/>
</dbReference>
<dbReference type="GO" id="GO:0000049">
    <property type="term" value="F:tRNA binding"/>
    <property type="evidence" value="ECO:0007669"/>
    <property type="project" value="UniProtKB-UniRule"/>
</dbReference>
<dbReference type="GO" id="GO:0001682">
    <property type="term" value="P:tRNA 5'-leader removal"/>
    <property type="evidence" value="ECO:0007669"/>
    <property type="project" value="UniProtKB-UniRule"/>
</dbReference>
<dbReference type="Gene3D" id="3.30.230.10">
    <property type="match status" value="1"/>
</dbReference>
<dbReference type="HAMAP" id="MF_00227">
    <property type="entry name" value="RNase_P"/>
    <property type="match status" value="1"/>
</dbReference>
<dbReference type="InterPro" id="IPR020568">
    <property type="entry name" value="Ribosomal_Su5_D2-typ_SF"/>
</dbReference>
<dbReference type="InterPro" id="IPR014721">
    <property type="entry name" value="Ribsml_uS5_D2-typ_fold_subgr"/>
</dbReference>
<dbReference type="InterPro" id="IPR000100">
    <property type="entry name" value="RNase_P"/>
</dbReference>
<dbReference type="NCBIfam" id="TIGR00188">
    <property type="entry name" value="rnpA"/>
    <property type="match status" value="1"/>
</dbReference>
<dbReference type="PANTHER" id="PTHR33992">
    <property type="entry name" value="RIBONUCLEASE P PROTEIN COMPONENT"/>
    <property type="match status" value="1"/>
</dbReference>
<dbReference type="PANTHER" id="PTHR33992:SF1">
    <property type="entry name" value="RIBONUCLEASE P PROTEIN COMPONENT"/>
    <property type="match status" value="1"/>
</dbReference>
<dbReference type="Pfam" id="PF00825">
    <property type="entry name" value="Ribonuclease_P"/>
    <property type="match status" value="1"/>
</dbReference>
<dbReference type="SUPFAM" id="SSF54211">
    <property type="entry name" value="Ribosomal protein S5 domain 2-like"/>
    <property type="match status" value="1"/>
</dbReference>
<name>RNPA_ALKMQ</name>
<gene>
    <name evidence="1" type="primary">rnpA</name>
    <name type="ordered locus">Amet_4801</name>
</gene>
<feature type="chain" id="PRO_1000058747" description="Ribonuclease P protein component">
    <location>
        <begin position="1"/>
        <end position="111"/>
    </location>
</feature>
<keyword id="KW-0255">Endonuclease</keyword>
<keyword id="KW-0378">Hydrolase</keyword>
<keyword id="KW-0540">Nuclease</keyword>
<keyword id="KW-1185">Reference proteome</keyword>
<keyword id="KW-0694">RNA-binding</keyword>
<keyword id="KW-0819">tRNA processing</keyword>